<comment type="similarity">
    <text evidence="3">Belongs to the eukaryotic ribosomal protein eL19 family.</text>
</comment>
<gene>
    <name type="primary">RPL19A</name>
    <name type="synonym">EMB2386</name>
    <name type="ordered locus">At1g02780</name>
    <name type="ORF">F22D16.23</name>
</gene>
<sequence>MVSLKLQKRLAASVMKCGKGKVWLDPNESSDISMANSRQNIRKLVKDGFIIRKPTKIHSRSRARKMKIAKMKGRHSGYGKRKGTREARLPTKVLWMRRMRVLRRLLKKYRETKKIDKHMYHDMYMRVKGNVFKNKRVLMESIHKSKAEKAREKTLSDQFEAKRAKNKASRERKHARREERLAKGPGGDVAPVAAPAPAATPAPTAAVPKKKSKK</sequence>
<dbReference type="EMBL" id="AC009525">
    <property type="protein sequence ID" value="AAF02889.1"/>
    <property type="molecule type" value="Genomic_DNA"/>
</dbReference>
<dbReference type="EMBL" id="CP002684">
    <property type="protein sequence ID" value="AEE27469.1"/>
    <property type="molecule type" value="Genomic_DNA"/>
</dbReference>
<dbReference type="EMBL" id="AF424580">
    <property type="protein sequence ID" value="AAL11574.1"/>
    <property type="molecule type" value="mRNA"/>
</dbReference>
<dbReference type="EMBL" id="BT010178">
    <property type="protein sequence ID" value="AAQ22647.1"/>
    <property type="molecule type" value="mRNA"/>
</dbReference>
<dbReference type="EMBL" id="Z18373">
    <property type="protein sequence ID" value="CAA79170.1"/>
    <property type="molecule type" value="mRNA"/>
</dbReference>
<dbReference type="PIR" id="G86157">
    <property type="entry name" value="G86157"/>
</dbReference>
<dbReference type="RefSeq" id="NP_171777.1">
    <property type="nucleotide sequence ID" value="NM_100157.4"/>
</dbReference>
<dbReference type="SMR" id="Q9SRX2"/>
<dbReference type="BioGRID" id="24642">
    <property type="interactions" value="138"/>
</dbReference>
<dbReference type="FunCoup" id="Q9SRX2">
    <property type="interactions" value="3960"/>
</dbReference>
<dbReference type="IntAct" id="Q9SRX2">
    <property type="interactions" value="5"/>
</dbReference>
<dbReference type="STRING" id="3702.Q9SRX2"/>
<dbReference type="GlyGen" id="Q9SRX2">
    <property type="glycosylation" value="2 sites"/>
</dbReference>
<dbReference type="iPTMnet" id="Q9SRX2"/>
<dbReference type="MetOSite" id="Q9SRX2"/>
<dbReference type="PaxDb" id="3702-AT1G02780.1"/>
<dbReference type="ProteomicsDB" id="226923"/>
<dbReference type="EnsemblPlants" id="AT1G02780.1">
    <property type="protein sequence ID" value="AT1G02780.1"/>
    <property type="gene ID" value="AT1G02780"/>
</dbReference>
<dbReference type="GeneID" id="839407"/>
<dbReference type="Gramene" id="AT1G02780.1">
    <property type="protein sequence ID" value="AT1G02780.1"/>
    <property type="gene ID" value="AT1G02780"/>
</dbReference>
<dbReference type="KEGG" id="ath:AT1G02780"/>
<dbReference type="Araport" id="AT1G02780"/>
<dbReference type="TAIR" id="AT1G02780">
    <property type="gene designation" value="EMB2386"/>
</dbReference>
<dbReference type="eggNOG" id="KOG1696">
    <property type="taxonomic scope" value="Eukaryota"/>
</dbReference>
<dbReference type="HOGENOM" id="CLU_083919_0_1_1"/>
<dbReference type="InParanoid" id="Q9SRX2"/>
<dbReference type="OMA" id="WMLRIRA"/>
<dbReference type="OrthoDB" id="1099856at2759"/>
<dbReference type="PhylomeDB" id="Q9SRX2"/>
<dbReference type="CD-CODE" id="4299E36E">
    <property type="entry name" value="Nucleolus"/>
</dbReference>
<dbReference type="PRO" id="PR:Q9SRX2"/>
<dbReference type="Proteomes" id="UP000006548">
    <property type="component" value="Chromosome 1"/>
</dbReference>
<dbReference type="ExpressionAtlas" id="Q9SRX2">
    <property type="expression patterns" value="baseline and differential"/>
</dbReference>
<dbReference type="GO" id="GO:0005829">
    <property type="term" value="C:cytosol"/>
    <property type="evidence" value="ECO:0000314"/>
    <property type="project" value="TAIR"/>
</dbReference>
<dbReference type="GO" id="GO:0022625">
    <property type="term" value="C:cytosolic large ribosomal subunit"/>
    <property type="evidence" value="ECO:0007005"/>
    <property type="project" value="TAIR"/>
</dbReference>
<dbReference type="GO" id="GO:0022626">
    <property type="term" value="C:cytosolic ribosome"/>
    <property type="evidence" value="ECO:0007005"/>
    <property type="project" value="TAIR"/>
</dbReference>
<dbReference type="GO" id="GO:0005576">
    <property type="term" value="C:extracellular region"/>
    <property type="evidence" value="ECO:0007005"/>
    <property type="project" value="TAIR"/>
</dbReference>
<dbReference type="GO" id="GO:0005730">
    <property type="term" value="C:nucleolus"/>
    <property type="evidence" value="ECO:0007005"/>
    <property type="project" value="TAIR"/>
</dbReference>
<dbReference type="GO" id="GO:0009506">
    <property type="term" value="C:plasmodesma"/>
    <property type="evidence" value="ECO:0007005"/>
    <property type="project" value="TAIR"/>
</dbReference>
<dbReference type="GO" id="GO:0003729">
    <property type="term" value="F:mRNA binding"/>
    <property type="evidence" value="ECO:0000314"/>
    <property type="project" value="TAIR"/>
</dbReference>
<dbReference type="GO" id="GO:0003735">
    <property type="term" value="F:structural constituent of ribosome"/>
    <property type="evidence" value="ECO:0000314"/>
    <property type="project" value="CAFA"/>
</dbReference>
<dbReference type="GO" id="GO:0006412">
    <property type="term" value="P:translation"/>
    <property type="evidence" value="ECO:0007669"/>
    <property type="project" value="InterPro"/>
</dbReference>
<dbReference type="CDD" id="cd01417">
    <property type="entry name" value="Ribosomal_L19e_E"/>
    <property type="match status" value="1"/>
</dbReference>
<dbReference type="FunFam" id="1.10.1200.240:FF:000001">
    <property type="entry name" value="Ribosomal protein L19"/>
    <property type="match status" value="1"/>
</dbReference>
<dbReference type="FunFam" id="1.10.1650.10:FF:000001">
    <property type="entry name" value="Ribosomal protein L19"/>
    <property type="match status" value="1"/>
</dbReference>
<dbReference type="Gene3D" id="1.10.1200.240">
    <property type="match status" value="1"/>
</dbReference>
<dbReference type="Gene3D" id="1.10.1650.10">
    <property type="match status" value="1"/>
</dbReference>
<dbReference type="HAMAP" id="MF_01475">
    <property type="entry name" value="Ribosomal_eL19"/>
    <property type="match status" value="1"/>
</dbReference>
<dbReference type="InterPro" id="IPR035970">
    <property type="entry name" value="60S_ribosomal_eL19_sf"/>
</dbReference>
<dbReference type="InterPro" id="IPR039547">
    <property type="entry name" value="Ribosomal_eL19"/>
</dbReference>
<dbReference type="InterPro" id="IPR023638">
    <property type="entry name" value="Ribosomal_eL19_CS"/>
</dbReference>
<dbReference type="InterPro" id="IPR000196">
    <property type="entry name" value="Ribosomal_eL19_dom"/>
</dbReference>
<dbReference type="InterPro" id="IPR015972">
    <property type="entry name" value="Ribosomal_eL19_dom1"/>
</dbReference>
<dbReference type="InterPro" id="IPR033935">
    <property type="entry name" value="Ribosomal_eL19_euk"/>
</dbReference>
<dbReference type="NCBIfam" id="NF006343">
    <property type="entry name" value="PRK08570.1"/>
    <property type="match status" value="1"/>
</dbReference>
<dbReference type="PANTHER" id="PTHR10722">
    <property type="entry name" value="60S RIBOSOMAL PROTEIN L19"/>
    <property type="match status" value="1"/>
</dbReference>
<dbReference type="Pfam" id="PF01280">
    <property type="entry name" value="Ribosomal_L19e"/>
    <property type="match status" value="1"/>
</dbReference>
<dbReference type="Pfam" id="PF25476">
    <property type="entry name" value="Ribosomal_L19e_C"/>
    <property type="match status" value="1"/>
</dbReference>
<dbReference type="SMART" id="SM01416">
    <property type="entry name" value="Ribosomal_L19e"/>
    <property type="match status" value="1"/>
</dbReference>
<dbReference type="SUPFAM" id="SSF48140">
    <property type="entry name" value="Ribosomal protein L19 (L19e)"/>
    <property type="match status" value="1"/>
</dbReference>
<dbReference type="PROSITE" id="PS00526">
    <property type="entry name" value="RIBOSOMAL_L19E"/>
    <property type="match status" value="1"/>
</dbReference>
<accession>Q9SRX2</accession>
<keyword id="KW-1185">Reference proteome</keyword>
<keyword id="KW-0687">Ribonucleoprotein</keyword>
<keyword id="KW-0689">Ribosomal protein</keyword>
<proteinExistence type="evidence at transcript level"/>
<feature type="chain" id="PRO_0000131179" description="Large ribosomal subunit protein eL19x">
    <location>
        <begin position="1"/>
        <end position="214"/>
    </location>
</feature>
<feature type="region of interest" description="Disordered" evidence="1">
    <location>
        <begin position="60"/>
        <end position="85"/>
    </location>
</feature>
<feature type="region of interest" description="Disordered" evidence="1">
    <location>
        <begin position="144"/>
        <end position="214"/>
    </location>
</feature>
<feature type="compositionally biased region" description="Basic residues" evidence="1">
    <location>
        <begin position="60"/>
        <end position="83"/>
    </location>
</feature>
<feature type="compositionally biased region" description="Basic and acidic residues" evidence="1">
    <location>
        <begin position="144"/>
        <end position="163"/>
    </location>
</feature>
<feature type="compositionally biased region" description="Basic residues" evidence="1">
    <location>
        <begin position="164"/>
        <end position="175"/>
    </location>
</feature>
<feature type="compositionally biased region" description="Low complexity" evidence="1">
    <location>
        <begin position="189"/>
        <end position="207"/>
    </location>
</feature>
<feature type="sequence conflict" description="In Ref. 4; CAA79170." evidence="3" ref="4">
    <original>YHD</original>
    <variation>SMT</variation>
    <location>
        <begin position="120"/>
        <end position="122"/>
    </location>
</feature>
<feature type="sequence conflict" description="In Ref. 4; CAA79170." evidence="3" ref="4">
    <original>R</original>
    <variation>S</variation>
    <location>
        <position position="126"/>
    </location>
</feature>
<reference key="1">
    <citation type="journal article" date="2000" name="Nature">
        <title>Sequence and analysis of chromosome 1 of the plant Arabidopsis thaliana.</title>
        <authorList>
            <person name="Theologis A."/>
            <person name="Ecker J.R."/>
            <person name="Palm C.J."/>
            <person name="Federspiel N.A."/>
            <person name="Kaul S."/>
            <person name="White O."/>
            <person name="Alonso J."/>
            <person name="Altafi H."/>
            <person name="Araujo R."/>
            <person name="Bowman C.L."/>
            <person name="Brooks S.Y."/>
            <person name="Buehler E."/>
            <person name="Chan A."/>
            <person name="Chao Q."/>
            <person name="Chen H."/>
            <person name="Cheuk R.F."/>
            <person name="Chin C.W."/>
            <person name="Chung M.K."/>
            <person name="Conn L."/>
            <person name="Conway A.B."/>
            <person name="Conway A.R."/>
            <person name="Creasy T.H."/>
            <person name="Dewar K."/>
            <person name="Dunn P."/>
            <person name="Etgu P."/>
            <person name="Feldblyum T.V."/>
            <person name="Feng J.-D."/>
            <person name="Fong B."/>
            <person name="Fujii C.Y."/>
            <person name="Gill J.E."/>
            <person name="Goldsmith A.D."/>
            <person name="Haas B."/>
            <person name="Hansen N.F."/>
            <person name="Hughes B."/>
            <person name="Huizar L."/>
            <person name="Hunter J.L."/>
            <person name="Jenkins J."/>
            <person name="Johnson-Hopson C."/>
            <person name="Khan S."/>
            <person name="Khaykin E."/>
            <person name="Kim C.J."/>
            <person name="Koo H.L."/>
            <person name="Kremenetskaia I."/>
            <person name="Kurtz D.B."/>
            <person name="Kwan A."/>
            <person name="Lam B."/>
            <person name="Langin-Hooper S."/>
            <person name="Lee A."/>
            <person name="Lee J.M."/>
            <person name="Lenz C.A."/>
            <person name="Li J.H."/>
            <person name="Li Y.-P."/>
            <person name="Lin X."/>
            <person name="Liu S.X."/>
            <person name="Liu Z.A."/>
            <person name="Luros J.S."/>
            <person name="Maiti R."/>
            <person name="Marziali A."/>
            <person name="Militscher J."/>
            <person name="Miranda M."/>
            <person name="Nguyen M."/>
            <person name="Nierman W.C."/>
            <person name="Osborne B.I."/>
            <person name="Pai G."/>
            <person name="Peterson J."/>
            <person name="Pham P.K."/>
            <person name="Rizzo M."/>
            <person name="Rooney T."/>
            <person name="Rowley D."/>
            <person name="Sakano H."/>
            <person name="Salzberg S.L."/>
            <person name="Schwartz J.R."/>
            <person name="Shinn P."/>
            <person name="Southwick A.M."/>
            <person name="Sun H."/>
            <person name="Tallon L.J."/>
            <person name="Tambunga G."/>
            <person name="Toriumi M.J."/>
            <person name="Town C.D."/>
            <person name="Utterback T."/>
            <person name="Van Aken S."/>
            <person name="Vaysberg M."/>
            <person name="Vysotskaia V.S."/>
            <person name="Walker M."/>
            <person name="Wu D."/>
            <person name="Yu G."/>
            <person name="Fraser C.M."/>
            <person name="Venter J.C."/>
            <person name="Davis R.W."/>
        </authorList>
    </citation>
    <scope>NUCLEOTIDE SEQUENCE [LARGE SCALE GENOMIC DNA]</scope>
    <source>
        <strain>cv. Columbia</strain>
    </source>
</reference>
<reference key="2">
    <citation type="journal article" date="2017" name="Plant J.">
        <title>Araport11: a complete reannotation of the Arabidopsis thaliana reference genome.</title>
        <authorList>
            <person name="Cheng C.Y."/>
            <person name="Krishnakumar V."/>
            <person name="Chan A.P."/>
            <person name="Thibaud-Nissen F."/>
            <person name="Schobel S."/>
            <person name="Town C.D."/>
        </authorList>
    </citation>
    <scope>GENOME REANNOTATION</scope>
    <source>
        <strain>cv. Columbia</strain>
    </source>
</reference>
<reference key="3">
    <citation type="journal article" date="2003" name="Science">
        <title>Empirical analysis of transcriptional activity in the Arabidopsis genome.</title>
        <authorList>
            <person name="Yamada K."/>
            <person name="Lim J."/>
            <person name="Dale J.M."/>
            <person name="Chen H."/>
            <person name="Shinn P."/>
            <person name="Palm C.J."/>
            <person name="Southwick A.M."/>
            <person name="Wu H.C."/>
            <person name="Kim C.J."/>
            <person name="Nguyen M."/>
            <person name="Pham P.K."/>
            <person name="Cheuk R.F."/>
            <person name="Karlin-Newmann G."/>
            <person name="Liu S.X."/>
            <person name="Lam B."/>
            <person name="Sakano H."/>
            <person name="Wu T."/>
            <person name="Yu G."/>
            <person name="Miranda M."/>
            <person name="Quach H.L."/>
            <person name="Tripp M."/>
            <person name="Chang C.H."/>
            <person name="Lee J.M."/>
            <person name="Toriumi M.J."/>
            <person name="Chan M.M."/>
            <person name="Tang C.C."/>
            <person name="Onodera C.S."/>
            <person name="Deng J.M."/>
            <person name="Akiyama K."/>
            <person name="Ansari Y."/>
            <person name="Arakawa T."/>
            <person name="Banh J."/>
            <person name="Banno F."/>
            <person name="Bowser L."/>
            <person name="Brooks S.Y."/>
            <person name="Carninci P."/>
            <person name="Chao Q."/>
            <person name="Choy N."/>
            <person name="Enju A."/>
            <person name="Goldsmith A.D."/>
            <person name="Gurjal M."/>
            <person name="Hansen N.F."/>
            <person name="Hayashizaki Y."/>
            <person name="Johnson-Hopson C."/>
            <person name="Hsuan V.W."/>
            <person name="Iida K."/>
            <person name="Karnes M."/>
            <person name="Khan S."/>
            <person name="Koesema E."/>
            <person name="Ishida J."/>
            <person name="Jiang P.X."/>
            <person name="Jones T."/>
            <person name="Kawai J."/>
            <person name="Kamiya A."/>
            <person name="Meyers C."/>
            <person name="Nakajima M."/>
            <person name="Narusaka M."/>
            <person name="Seki M."/>
            <person name="Sakurai T."/>
            <person name="Satou M."/>
            <person name="Tamse R."/>
            <person name="Vaysberg M."/>
            <person name="Wallender E.K."/>
            <person name="Wong C."/>
            <person name="Yamamura Y."/>
            <person name="Yuan S."/>
            <person name="Shinozaki K."/>
            <person name="Davis R.W."/>
            <person name="Theologis A."/>
            <person name="Ecker J.R."/>
        </authorList>
    </citation>
    <scope>NUCLEOTIDE SEQUENCE [LARGE SCALE MRNA]</scope>
    <source>
        <strain>cv. Columbia</strain>
    </source>
</reference>
<reference key="4">
    <citation type="journal article" date="1993" name="Plant J.">
        <title>An inventory of 1152 expressed sequence tags obtained by partial sequencing of cDNAs from Arabidopsis thaliana.</title>
        <authorList>
            <person name="Hoefte H."/>
            <person name="Desprez T."/>
            <person name="Amselem J."/>
            <person name="Chiapello H."/>
            <person name="Rouze P."/>
            <person name="Caboche M."/>
            <person name="Moisan A."/>
            <person name="Jourjon M.-F."/>
            <person name="Charpenteau J.-L."/>
            <person name="Berthomieu P."/>
            <person name="Guerrier D."/>
            <person name="Giraudat J."/>
            <person name="Quigley F."/>
            <person name="Thomas F."/>
            <person name="Yu D.-Y."/>
            <person name="Mache R."/>
            <person name="Raynal M."/>
            <person name="Cooke R."/>
            <person name="Grellet F."/>
            <person name="Delseny M."/>
            <person name="Parmentier Y."/>
            <person name="de Marcillac G."/>
            <person name="Gigot C."/>
            <person name="Fleck J."/>
            <person name="Philipps G."/>
            <person name="Axelos M."/>
            <person name="Bardet C."/>
            <person name="Tremousaygue D."/>
            <person name="Lescure B."/>
        </authorList>
    </citation>
    <scope>NUCLEOTIDE SEQUENCE [LARGE SCALE MRNA] OF 57-126</scope>
    <source>
        <strain>cv. C24</strain>
        <tissue>Flower bud</tissue>
    </source>
</reference>
<reference key="5">
    <citation type="journal article" date="2001" name="Plant Physiol.">
        <title>The organization of cytoplasmic ribosomal protein genes in the Arabidopsis genome.</title>
        <authorList>
            <person name="Barakat A."/>
            <person name="Szick-Miranda K."/>
            <person name="Chang I.-F."/>
            <person name="Guyot R."/>
            <person name="Blanc G."/>
            <person name="Cooke R."/>
            <person name="Delseny M."/>
            <person name="Bailey-Serres J."/>
        </authorList>
    </citation>
    <scope>GENE FAMILY ORGANIZATION</scope>
    <scope>NOMENCLATURE</scope>
</reference>
<reference key="6">
    <citation type="journal article" date="2023" name="Plant Cell">
        <title>An updated nomenclature for plant ribosomal protein genes.</title>
        <authorList>
            <person name="Scarpin M.R."/>
            <person name="Busche M."/>
            <person name="Martinez R.E."/>
            <person name="Harper L.C."/>
            <person name="Reiser L."/>
            <person name="Szakonyi D."/>
            <person name="Merchante C."/>
            <person name="Lan T."/>
            <person name="Xiong W."/>
            <person name="Mo B."/>
            <person name="Tang G."/>
            <person name="Chen X."/>
            <person name="Bailey-Serres J."/>
            <person name="Browning K.S."/>
            <person name="Brunkard J.O."/>
        </authorList>
    </citation>
    <scope>NOMENCLATURE</scope>
</reference>
<protein>
    <recommendedName>
        <fullName evidence="2">Large ribosomal subunit protein eL19x</fullName>
    </recommendedName>
    <alternativeName>
        <fullName>60S ribosomal protein L19-1</fullName>
    </alternativeName>
    <alternativeName>
        <fullName>Protein EMBRYO DEFECTIVE 2386</fullName>
    </alternativeName>
</protein>
<organism>
    <name type="scientific">Arabidopsis thaliana</name>
    <name type="common">Mouse-ear cress</name>
    <dbReference type="NCBI Taxonomy" id="3702"/>
    <lineage>
        <taxon>Eukaryota</taxon>
        <taxon>Viridiplantae</taxon>
        <taxon>Streptophyta</taxon>
        <taxon>Embryophyta</taxon>
        <taxon>Tracheophyta</taxon>
        <taxon>Spermatophyta</taxon>
        <taxon>Magnoliopsida</taxon>
        <taxon>eudicotyledons</taxon>
        <taxon>Gunneridae</taxon>
        <taxon>Pentapetalae</taxon>
        <taxon>rosids</taxon>
        <taxon>malvids</taxon>
        <taxon>Brassicales</taxon>
        <taxon>Brassicaceae</taxon>
        <taxon>Camelineae</taxon>
        <taxon>Arabidopsis</taxon>
    </lineage>
</organism>
<name>RL191_ARATH</name>
<evidence type="ECO:0000256" key="1">
    <source>
        <dbReference type="SAM" id="MobiDB-lite"/>
    </source>
</evidence>
<evidence type="ECO:0000303" key="2">
    <source>
    </source>
</evidence>
<evidence type="ECO:0000305" key="3"/>